<protein>
    <recommendedName>
        <fullName evidence="1">Biotin synthase</fullName>
        <ecNumber evidence="1">2.8.1.6</ecNumber>
    </recommendedName>
</protein>
<accession>Q3K5P1</accession>
<organism>
    <name type="scientific">Pseudomonas fluorescens (strain Pf0-1)</name>
    <dbReference type="NCBI Taxonomy" id="205922"/>
    <lineage>
        <taxon>Bacteria</taxon>
        <taxon>Pseudomonadati</taxon>
        <taxon>Pseudomonadota</taxon>
        <taxon>Gammaproteobacteria</taxon>
        <taxon>Pseudomonadales</taxon>
        <taxon>Pseudomonadaceae</taxon>
        <taxon>Pseudomonas</taxon>
    </lineage>
</organism>
<sequence>MSASTTATLRHDWTLAEVKALFVQPFNDLLFQAQTVHRAHFDANRVQVSTLLSIKTGACPEDCKYCPQSGHYNTGLEKEKLMEVQKVLEEAARAKAIGSTRFCMGAAWKHPSAKDMPYVLKMVEGVKAMGLETCMTLGRLDQDQTEALAKAGLDYYNHNLDTSPEFYGSIITTRTYAERLQTLAYVRDAGMKICSGGILGMGESLDDRANLLIQLANLPEHPESVPINMLVKVAGTPLENADDVDPFDFIRMLAVARILMPQSHVRLSAGREAMNEQMQALAFFAGANSIFYGDKLLTTANPQADKDMQLFARLGIQPEAREEHADEVHQAAIEQALVEQKSSEQFYNAAV</sequence>
<gene>
    <name evidence="1" type="primary">bioB</name>
    <name type="ordered locus">Pfl01_5176</name>
</gene>
<proteinExistence type="inferred from homology"/>
<keyword id="KW-0001">2Fe-2S</keyword>
<keyword id="KW-0004">4Fe-4S</keyword>
<keyword id="KW-0093">Biotin biosynthesis</keyword>
<keyword id="KW-0408">Iron</keyword>
<keyword id="KW-0411">Iron-sulfur</keyword>
<keyword id="KW-0479">Metal-binding</keyword>
<keyword id="KW-0949">S-adenosyl-L-methionine</keyword>
<keyword id="KW-0808">Transferase</keyword>
<dbReference type="EC" id="2.8.1.6" evidence="1"/>
<dbReference type="EMBL" id="CP000094">
    <property type="protein sequence ID" value="ABA76913.1"/>
    <property type="molecule type" value="Genomic_DNA"/>
</dbReference>
<dbReference type="RefSeq" id="WP_011336244.1">
    <property type="nucleotide sequence ID" value="NC_007492.2"/>
</dbReference>
<dbReference type="SMR" id="Q3K5P1"/>
<dbReference type="KEGG" id="pfo:Pfl01_5176"/>
<dbReference type="eggNOG" id="COG0502">
    <property type="taxonomic scope" value="Bacteria"/>
</dbReference>
<dbReference type="HOGENOM" id="CLU_033172_1_2_6"/>
<dbReference type="UniPathway" id="UPA00078">
    <property type="reaction ID" value="UER00162"/>
</dbReference>
<dbReference type="Proteomes" id="UP000002704">
    <property type="component" value="Chromosome"/>
</dbReference>
<dbReference type="GO" id="GO:0051537">
    <property type="term" value="F:2 iron, 2 sulfur cluster binding"/>
    <property type="evidence" value="ECO:0007669"/>
    <property type="project" value="UniProtKB-KW"/>
</dbReference>
<dbReference type="GO" id="GO:0051539">
    <property type="term" value="F:4 iron, 4 sulfur cluster binding"/>
    <property type="evidence" value="ECO:0007669"/>
    <property type="project" value="UniProtKB-KW"/>
</dbReference>
<dbReference type="GO" id="GO:0004076">
    <property type="term" value="F:biotin synthase activity"/>
    <property type="evidence" value="ECO:0007669"/>
    <property type="project" value="UniProtKB-UniRule"/>
</dbReference>
<dbReference type="GO" id="GO:0005506">
    <property type="term" value="F:iron ion binding"/>
    <property type="evidence" value="ECO:0007669"/>
    <property type="project" value="UniProtKB-UniRule"/>
</dbReference>
<dbReference type="GO" id="GO:0009102">
    <property type="term" value="P:biotin biosynthetic process"/>
    <property type="evidence" value="ECO:0007669"/>
    <property type="project" value="UniProtKB-UniRule"/>
</dbReference>
<dbReference type="CDD" id="cd01335">
    <property type="entry name" value="Radical_SAM"/>
    <property type="match status" value="1"/>
</dbReference>
<dbReference type="FunFam" id="3.20.20.70:FF:000011">
    <property type="entry name" value="Biotin synthase"/>
    <property type="match status" value="1"/>
</dbReference>
<dbReference type="Gene3D" id="3.20.20.70">
    <property type="entry name" value="Aldolase class I"/>
    <property type="match status" value="1"/>
</dbReference>
<dbReference type="HAMAP" id="MF_01694">
    <property type="entry name" value="BioB"/>
    <property type="match status" value="1"/>
</dbReference>
<dbReference type="InterPro" id="IPR013785">
    <property type="entry name" value="Aldolase_TIM"/>
</dbReference>
<dbReference type="InterPro" id="IPR010722">
    <property type="entry name" value="BATS_dom"/>
</dbReference>
<dbReference type="InterPro" id="IPR002684">
    <property type="entry name" value="Biotin_synth/BioAB"/>
</dbReference>
<dbReference type="InterPro" id="IPR024177">
    <property type="entry name" value="Biotin_synthase"/>
</dbReference>
<dbReference type="InterPro" id="IPR006638">
    <property type="entry name" value="Elp3/MiaA/NifB-like_rSAM"/>
</dbReference>
<dbReference type="InterPro" id="IPR007197">
    <property type="entry name" value="rSAM"/>
</dbReference>
<dbReference type="NCBIfam" id="TIGR00433">
    <property type="entry name" value="bioB"/>
    <property type="match status" value="1"/>
</dbReference>
<dbReference type="PANTHER" id="PTHR22976">
    <property type="entry name" value="BIOTIN SYNTHASE"/>
    <property type="match status" value="1"/>
</dbReference>
<dbReference type="PANTHER" id="PTHR22976:SF2">
    <property type="entry name" value="BIOTIN SYNTHASE, MITOCHONDRIAL"/>
    <property type="match status" value="1"/>
</dbReference>
<dbReference type="Pfam" id="PF06968">
    <property type="entry name" value="BATS"/>
    <property type="match status" value="1"/>
</dbReference>
<dbReference type="Pfam" id="PF04055">
    <property type="entry name" value="Radical_SAM"/>
    <property type="match status" value="1"/>
</dbReference>
<dbReference type="PIRSF" id="PIRSF001619">
    <property type="entry name" value="Biotin_synth"/>
    <property type="match status" value="1"/>
</dbReference>
<dbReference type="SFLD" id="SFLDF00272">
    <property type="entry name" value="biotin_synthase"/>
    <property type="match status" value="1"/>
</dbReference>
<dbReference type="SFLD" id="SFLDS00029">
    <property type="entry name" value="Radical_SAM"/>
    <property type="match status" value="1"/>
</dbReference>
<dbReference type="SMART" id="SM00876">
    <property type="entry name" value="BATS"/>
    <property type="match status" value="1"/>
</dbReference>
<dbReference type="SMART" id="SM00729">
    <property type="entry name" value="Elp3"/>
    <property type="match status" value="1"/>
</dbReference>
<dbReference type="SUPFAM" id="SSF102114">
    <property type="entry name" value="Radical SAM enzymes"/>
    <property type="match status" value="1"/>
</dbReference>
<dbReference type="PROSITE" id="PS51918">
    <property type="entry name" value="RADICAL_SAM"/>
    <property type="match status" value="1"/>
</dbReference>
<evidence type="ECO:0000255" key="1">
    <source>
        <dbReference type="HAMAP-Rule" id="MF_01694"/>
    </source>
</evidence>
<evidence type="ECO:0000255" key="2">
    <source>
        <dbReference type="PROSITE-ProRule" id="PRU01266"/>
    </source>
</evidence>
<feature type="chain" id="PRO_0000381561" description="Biotin synthase">
    <location>
        <begin position="1"/>
        <end position="351"/>
    </location>
</feature>
<feature type="domain" description="Radical SAM core" evidence="2">
    <location>
        <begin position="44"/>
        <end position="262"/>
    </location>
</feature>
<feature type="binding site" evidence="1">
    <location>
        <position position="59"/>
    </location>
    <ligand>
        <name>[4Fe-4S] cluster</name>
        <dbReference type="ChEBI" id="CHEBI:49883"/>
        <note>4Fe-4S-S-AdoMet</note>
    </ligand>
</feature>
<feature type="binding site" evidence="1">
    <location>
        <position position="63"/>
    </location>
    <ligand>
        <name>[4Fe-4S] cluster</name>
        <dbReference type="ChEBI" id="CHEBI:49883"/>
        <note>4Fe-4S-S-AdoMet</note>
    </ligand>
</feature>
<feature type="binding site" evidence="1">
    <location>
        <position position="66"/>
    </location>
    <ligand>
        <name>[4Fe-4S] cluster</name>
        <dbReference type="ChEBI" id="CHEBI:49883"/>
        <note>4Fe-4S-S-AdoMet</note>
    </ligand>
</feature>
<feature type="binding site" evidence="1">
    <location>
        <position position="103"/>
    </location>
    <ligand>
        <name>[2Fe-2S] cluster</name>
        <dbReference type="ChEBI" id="CHEBI:190135"/>
    </ligand>
</feature>
<feature type="binding site" evidence="1">
    <location>
        <position position="134"/>
    </location>
    <ligand>
        <name>[2Fe-2S] cluster</name>
        <dbReference type="ChEBI" id="CHEBI:190135"/>
    </ligand>
</feature>
<feature type="binding site" evidence="1">
    <location>
        <position position="194"/>
    </location>
    <ligand>
        <name>[2Fe-2S] cluster</name>
        <dbReference type="ChEBI" id="CHEBI:190135"/>
    </ligand>
</feature>
<feature type="binding site" evidence="1">
    <location>
        <position position="266"/>
    </location>
    <ligand>
        <name>[2Fe-2S] cluster</name>
        <dbReference type="ChEBI" id="CHEBI:190135"/>
    </ligand>
</feature>
<reference key="1">
    <citation type="journal article" date="2009" name="Genome Biol.">
        <title>Genomic and genetic analyses of diversity and plant interactions of Pseudomonas fluorescens.</title>
        <authorList>
            <person name="Silby M.W."/>
            <person name="Cerdeno-Tarraga A.M."/>
            <person name="Vernikos G.S."/>
            <person name="Giddens S.R."/>
            <person name="Jackson R.W."/>
            <person name="Preston G.M."/>
            <person name="Zhang X.-X."/>
            <person name="Moon C.D."/>
            <person name="Gehrig S.M."/>
            <person name="Godfrey S.A.C."/>
            <person name="Knight C.G."/>
            <person name="Malone J.G."/>
            <person name="Robinson Z."/>
            <person name="Spiers A.J."/>
            <person name="Harris S."/>
            <person name="Challis G.L."/>
            <person name="Yaxley A.M."/>
            <person name="Harris D."/>
            <person name="Seeger K."/>
            <person name="Murphy L."/>
            <person name="Rutter S."/>
            <person name="Squares R."/>
            <person name="Quail M.A."/>
            <person name="Saunders E."/>
            <person name="Mavromatis K."/>
            <person name="Brettin T.S."/>
            <person name="Bentley S.D."/>
            <person name="Hothersall J."/>
            <person name="Stephens E."/>
            <person name="Thomas C.M."/>
            <person name="Parkhill J."/>
            <person name="Levy S.B."/>
            <person name="Rainey P.B."/>
            <person name="Thomson N.R."/>
        </authorList>
    </citation>
    <scope>NUCLEOTIDE SEQUENCE [LARGE SCALE GENOMIC DNA]</scope>
    <source>
        <strain>Pf0-1</strain>
    </source>
</reference>
<comment type="function">
    <text evidence="1">Catalyzes the conversion of dethiobiotin (DTB) to biotin by the insertion of a sulfur atom into dethiobiotin via a radical-based mechanism.</text>
</comment>
<comment type="catalytic activity">
    <reaction evidence="1">
        <text>(4R,5S)-dethiobiotin + (sulfur carrier)-SH + 2 reduced [2Fe-2S]-[ferredoxin] + 2 S-adenosyl-L-methionine = (sulfur carrier)-H + biotin + 2 5'-deoxyadenosine + 2 L-methionine + 2 oxidized [2Fe-2S]-[ferredoxin]</text>
        <dbReference type="Rhea" id="RHEA:22060"/>
        <dbReference type="Rhea" id="RHEA-COMP:10000"/>
        <dbReference type="Rhea" id="RHEA-COMP:10001"/>
        <dbReference type="Rhea" id="RHEA-COMP:14737"/>
        <dbReference type="Rhea" id="RHEA-COMP:14739"/>
        <dbReference type="ChEBI" id="CHEBI:17319"/>
        <dbReference type="ChEBI" id="CHEBI:29917"/>
        <dbReference type="ChEBI" id="CHEBI:33737"/>
        <dbReference type="ChEBI" id="CHEBI:33738"/>
        <dbReference type="ChEBI" id="CHEBI:57586"/>
        <dbReference type="ChEBI" id="CHEBI:57844"/>
        <dbReference type="ChEBI" id="CHEBI:59789"/>
        <dbReference type="ChEBI" id="CHEBI:64428"/>
        <dbReference type="ChEBI" id="CHEBI:149473"/>
        <dbReference type="EC" id="2.8.1.6"/>
    </reaction>
</comment>
<comment type="cofactor">
    <cofactor evidence="1">
        <name>[4Fe-4S] cluster</name>
        <dbReference type="ChEBI" id="CHEBI:49883"/>
    </cofactor>
    <text evidence="1">Binds 1 [4Fe-4S] cluster. The cluster is coordinated with 3 cysteines and an exchangeable S-adenosyl-L-methionine.</text>
</comment>
<comment type="cofactor">
    <cofactor evidence="1">
        <name>[2Fe-2S] cluster</name>
        <dbReference type="ChEBI" id="CHEBI:190135"/>
    </cofactor>
    <text evidence="1">Binds 1 [2Fe-2S] cluster. The cluster is coordinated with 3 cysteines and 1 arginine.</text>
</comment>
<comment type="pathway">
    <text evidence="1">Cofactor biosynthesis; biotin biosynthesis; biotin from 7,8-diaminononanoate: step 2/2.</text>
</comment>
<comment type="subunit">
    <text evidence="1">Homodimer.</text>
</comment>
<comment type="similarity">
    <text evidence="1">Belongs to the radical SAM superfamily. Biotin synthase family.</text>
</comment>
<name>BIOB_PSEPF</name>